<gene>
    <name type="primary">hisF2</name>
    <name type="ordered locus">Cj1314c</name>
</gene>
<feature type="chain" id="PRO_0000142139" description="Putative imidazole glycerol phosphate synthase subunit hisF2">
    <location>
        <begin position="1"/>
        <end position="248"/>
    </location>
</feature>
<feature type="active site" evidence="2">
    <location>
        <position position="129"/>
    </location>
</feature>
<dbReference type="EC" id="4.3.2.10"/>
<dbReference type="EMBL" id="AL111168">
    <property type="protein sequence ID" value="CAL35428.1"/>
    <property type="molecule type" value="Genomic_DNA"/>
</dbReference>
<dbReference type="PIR" id="G81274">
    <property type="entry name" value="G81274"/>
</dbReference>
<dbReference type="RefSeq" id="WP_002858306.1">
    <property type="nucleotide sequence ID" value="NZ_SZUC01000001.1"/>
</dbReference>
<dbReference type="SMR" id="Q0P8U3"/>
<dbReference type="STRING" id="192222.Cj1314c"/>
<dbReference type="PaxDb" id="192222-Cj1314c"/>
<dbReference type="EnsemblBacteria" id="CAL35428">
    <property type="protein sequence ID" value="CAL35428"/>
    <property type="gene ID" value="Cj1314c"/>
</dbReference>
<dbReference type="KEGG" id="cje:Cj1314c"/>
<dbReference type="PATRIC" id="fig|192222.6.peg.1296"/>
<dbReference type="eggNOG" id="COG0107">
    <property type="taxonomic scope" value="Bacteria"/>
</dbReference>
<dbReference type="HOGENOM" id="CLU_048577_4_0_7"/>
<dbReference type="OrthoDB" id="9807749at2"/>
<dbReference type="UniPathway" id="UPA00031">
    <property type="reaction ID" value="UER00010"/>
</dbReference>
<dbReference type="Proteomes" id="UP000000799">
    <property type="component" value="Chromosome"/>
</dbReference>
<dbReference type="GO" id="GO:0005737">
    <property type="term" value="C:cytoplasm"/>
    <property type="evidence" value="ECO:0007669"/>
    <property type="project" value="UniProtKB-SubCell"/>
</dbReference>
<dbReference type="GO" id="GO:0000107">
    <property type="term" value="F:imidazoleglycerol-phosphate synthase activity"/>
    <property type="evidence" value="ECO:0007669"/>
    <property type="project" value="InterPro"/>
</dbReference>
<dbReference type="GO" id="GO:0016829">
    <property type="term" value="F:lyase activity"/>
    <property type="evidence" value="ECO:0007669"/>
    <property type="project" value="UniProtKB-KW"/>
</dbReference>
<dbReference type="GO" id="GO:0000105">
    <property type="term" value="P:L-histidine biosynthetic process"/>
    <property type="evidence" value="ECO:0007669"/>
    <property type="project" value="UniProtKB-UniPathway"/>
</dbReference>
<dbReference type="CDD" id="cd04731">
    <property type="entry name" value="HisF"/>
    <property type="match status" value="1"/>
</dbReference>
<dbReference type="Gene3D" id="3.20.20.70">
    <property type="entry name" value="Aldolase class I"/>
    <property type="match status" value="1"/>
</dbReference>
<dbReference type="InterPro" id="IPR013785">
    <property type="entry name" value="Aldolase_TIM"/>
</dbReference>
<dbReference type="InterPro" id="IPR006062">
    <property type="entry name" value="His_biosynth"/>
</dbReference>
<dbReference type="InterPro" id="IPR004651">
    <property type="entry name" value="HisF"/>
</dbReference>
<dbReference type="InterPro" id="IPR050064">
    <property type="entry name" value="IGPS_HisA/HisF"/>
</dbReference>
<dbReference type="InterPro" id="IPR011060">
    <property type="entry name" value="RibuloseP-bd_barrel"/>
</dbReference>
<dbReference type="PANTHER" id="PTHR21235:SF2">
    <property type="entry name" value="IMIDAZOLE GLYCEROL PHOSPHATE SYNTHASE HISHF"/>
    <property type="match status" value="1"/>
</dbReference>
<dbReference type="PANTHER" id="PTHR21235">
    <property type="entry name" value="IMIDAZOLE GLYCEROL PHOSPHATE SYNTHASE SUBUNIT HISF/H IGP SYNTHASE SUBUNIT HISF/H"/>
    <property type="match status" value="1"/>
</dbReference>
<dbReference type="Pfam" id="PF00977">
    <property type="entry name" value="His_biosynth"/>
    <property type="match status" value="1"/>
</dbReference>
<dbReference type="SUPFAM" id="SSF51366">
    <property type="entry name" value="Ribulose-phoshate binding barrel"/>
    <property type="match status" value="1"/>
</dbReference>
<organism>
    <name type="scientific">Campylobacter jejuni subsp. jejuni serotype O:2 (strain ATCC 700819 / NCTC 11168)</name>
    <dbReference type="NCBI Taxonomy" id="192222"/>
    <lineage>
        <taxon>Bacteria</taxon>
        <taxon>Pseudomonadati</taxon>
        <taxon>Campylobacterota</taxon>
        <taxon>Epsilonproteobacteria</taxon>
        <taxon>Campylobacterales</taxon>
        <taxon>Campylobacteraceae</taxon>
        <taxon>Campylobacter</taxon>
    </lineage>
</organism>
<sequence>MLKTRIIPCVLLKNSQLVKSIEFKDFRTIGHLTSTMRIYNARNVDELIILDIDASKSGEIDFESIEDLAKECFMPLTIGGGIKTLEDIQKILNLGADKISINSKALEDMDFISKAGNRFGSQCIVCSIDVKRKGDQFCVYDRGNLLEKSPLELALEYEKKGAGELLLTSVDFEGKAKGYDLELLKIFQNKLKIPLIINGGLSKPSDGVEALNLGADALAGAYIFHFSKYTPKDVKEELARQGFAVRLL</sequence>
<reference key="1">
    <citation type="journal article" date="2000" name="Nature">
        <title>The genome sequence of the food-borne pathogen Campylobacter jejuni reveals hypervariable sequences.</title>
        <authorList>
            <person name="Parkhill J."/>
            <person name="Wren B.W."/>
            <person name="Mungall K.L."/>
            <person name="Ketley J.M."/>
            <person name="Churcher C.M."/>
            <person name="Basham D."/>
            <person name="Chillingworth T."/>
            <person name="Davies R.M."/>
            <person name="Feltwell T."/>
            <person name="Holroyd S."/>
            <person name="Jagels K."/>
            <person name="Karlyshev A.V."/>
            <person name="Moule S."/>
            <person name="Pallen M.J."/>
            <person name="Penn C.W."/>
            <person name="Quail M.A."/>
            <person name="Rajandream M.A."/>
            <person name="Rutherford K.M."/>
            <person name="van Vliet A.H.M."/>
            <person name="Whitehead S."/>
            <person name="Barrell B.G."/>
        </authorList>
    </citation>
    <scope>NUCLEOTIDE SEQUENCE [LARGE SCALE GENOMIC DNA]</scope>
    <source>
        <strain>ATCC 700819 / NCTC 11168</strain>
    </source>
</reference>
<name>HIS62_CAMJE</name>
<proteinExistence type="inferred from homology"/>
<keyword id="KW-0028">Amino-acid biosynthesis</keyword>
<keyword id="KW-0963">Cytoplasm</keyword>
<keyword id="KW-0368">Histidine biosynthesis</keyword>
<keyword id="KW-0456">Lyase</keyword>
<keyword id="KW-1185">Reference proteome</keyword>
<protein>
    <recommendedName>
        <fullName>Putative imidazole glycerol phosphate synthase subunit hisF2</fullName>
        <ecNumber>4.3.2.10</ecNumber>
    </recommendedName>
    <alternativeName>
        <fullName>IGP synthase cyclase subunit</fullName>
    </alternativeName>
    <alternativeName>
        <fullName>IGP synthase subunit hisF2</fullName>
    </alternativeName>
    <alternativeName>
        <fullName>ImGP synthase subunit hisF2</fullName>
        <shortName>IGPS subunit hisF2</shortName>
    </alternativeName>
</protein>
<accession>Q0P8U3</accession>
<accession>Q939J5</accession>
<accession>Q9PMY5</accession>
<comment type="function">
    <text evidence="1">IGPS catalyzes the conversion of PRFAR and glutamine to IGP, AICAR and glutamate. The HisF subunit catalyzes the cyclization activity that produces IGP and AICAR from PRFAR using the ammonia provided by the HisH subunit (By similarity).</text>
</comment>
<comment type="catalytic activity">
    <reaction>
        <text>5-[(5-phospho-1-deoxy-D-ribulos-1-ylimino)methylamino]-1-(5-phospho-beta-D-ribosyl)imidazole-4-carboxamide + L-glutamine = D-erythro-1-(imidazol-4-yl)glycerol 3-phosphate + 5-amino-1-(5-phospho-beta-D-ribosyl)imidazole-4-carboxamide + L-glutamate + H(+)</text>
        <dbReference type="Rhea" id="RHEA:24793"/>
        <dbReference type="ChEBI" id="CHEBI:15378"/>
        <dbReference type="ChEBI" id="CHEBI:29985"/>
        <dbReference type="ChEBI" id="CHEBI:58278"/>
        <dbReference type="ChEBI" id="CHEBI:58359"/>
        <dbReference type="ChEBI" id="CHEBI:58475"/>
        <dbReference type="ChEBI" id="CHEBI:58525"/>
        <dbReference type="EC" id="4.3.2.10"/>
    </reaction>
</comment>
<comment type="pathway">
    <text>Amino-acid biosynthesis; L-histidine biosynthesis; L-histidine from 5-phospho-alpha-D-ribose 1-diphosphate: step 5/9.</text>
</comment>
<comment type="subunit">
    <text evidence="1">Heterodimer of HisH and HisF.</text>
</comment>
<comment type="subcellular location">
    <subcellularLocation>
        <location evidence="1">Cytoplasm</location>
    </subcellularLocation>
</comment>
<comment type="similarity">
    <text evidence="3">Belongs to the HisA/HisF family.</text>
</comment>
<comment type="caution">
    <text evidence="3">The potential active site Asp residue in position 11 is replaced by a Leu.</text>
</comment>
<evidence type="ECO:0000250" key="1"/>
<evidence type="ECO:0000255" key="2"/>
<evidence type="ECO:0000305" key="3"/>